<dbReference type="EMBL" id="AL132968">
    <property type="protein sequence ID" value="CAB63153.1"/>
    <property type="molecule type" value="Genomic_DNA"/>
</dbReference>
<dbReference type="EMBL" id="CP002686">
    <property type="protein sequence ID" value="AEE78825.1"/>
    <property type="molecule type" value="Genomic_DNA"/>
</dbReference>
<dbReference type="EMBL" id="AF419595">
    <property type="protein sequence ID" value="AAL31927.1"/>
    <property type="molecule type" value="mRNA"/>
</dbReference>
<dbReference type="EMBL" id="BT002309">
    <property type="protein sequence ID" value="AAN73306.1"/>
    <property type="molecule type" value="mRNA"/>
</dbReference>
<dbReference type="EMBL" id="AJ238803">
    <property type="protein sequence ID" value="CAB43521.1"/>
    <property type="status" value="ALT_INIT"/>
    <property type="molecule type" value="mRNA"/>
</dbReference>
<dbReference type="PIR" id="T46063">
    <property type="entry name" value="T46063"/>
</dbReference>
<dbReference type="RefSeq" id="NP_190735.1">
    <property type="nucleotide sequence ID" value="NM_115026.2"/>
</dbReference>
<dbReference type="SMR" id="Q9SCU1"/>
<dbReference type="FunCoup" id="Q9SCU1">
    <property type="interactions" value="1309"/>
</dbReference>
<dbReference type="STRING" id="3702.Q9SCU1"/>
<dbReference type="iPTMnet" id="Q9SCU1"/>
<dbReference type="PaxDb" id="3702-AT3G51670.1"/>
<dbReference type="ProteomicsDB" id="236276"/>
<dbReference type="EnsemblPlants" id="AT3G51670.1">
    <property type="protein sequence ID" value="AT3G51670.1"/>
    <property type="gene ID" value="AT3G51670"/>
</dbReference>
<dbReference type="GeneID" id="824330"/>
<dbReference type="Gramene" id="AT3G51670.1">
    <property type="protein sequence ID" value="AT3G51670.1"/>
    <property type="gene ID" value="AT3G51670"/>
</dbReference>
<dbReference type="KEGG" id="ath:AT3G51670"/>
<dbReference type="Araport" id="AT3G51670"/>
<dbReference type="TAIR" id="AT3G51670">
    <property type="gene designation" value="PATL6"/>
</dbReference>
<dbReference type="eggNOG" id="KOG1471">
    <property type="taxonomic scope" value="Eukaryota"/>
</dbReference>
<dbReference type="HOGENOM" id="CLU_023762_0_1_1"/>
<dbReference type="InParanoid" id="Q9SCU1"/>
<dbReference type="OMA" id="HCYDKVG"/>
<dbReference type="PhylomeDB" id="Q9SCU1"/>
<dbReference type="PRO" id="PR:Q9SCU1"/>
<dbReference type="Proteomes" id="UP000006548">
    <property type="component" value="Chromosome 3"/>
</dbReference>
<dbReference type="ExpressionAtlas" id="Q9SCU1">
    <property type="expression patterns" value="baseline and differential"/>
</dbReference>
<dbReference type="GO" id="GO:0005737">
    <property type="term" value="C:cytoplasm"/>
    <property type="evidence" value="ECO:0007669"/>
    <property type="project" value="UniProtKB-SubCell"/>
</dbReference>
<dbReference type="GO" id="GO:0005886">
    <property type="term" value="C:plasma membrane"/>
    <property type="evidence" value="ECO:0007005"/>
    <property type="project" value="TAIR"/>
</dbReference>
<dbReference type="GO" id="GO:0008289">
    <property type="term" value="F:lipid binding"/>
    <property type="evidence" value="ECO:0007669"/>
    <property type="project" value="UniProtKB-KW"/>
</dbReference>
<dbReference type="GO" id="GO:0051301">
    <property type="term" value="P:cell division"/>
    <property type="evidence" value="ECO:0007669"/>
    <property type="project" value="UniProtKB-KW"/>
</dbReference>
<dbReference type="GO" id="GO:0071365">
    <property type="term" value="P:cellular response to auxin stimulus"/>
    <property type="evidence" value="ECO:0000316"/>
    <property type="project" value="TAIR"/>
</dbReference>
<dbReference type="GO" id="GO:1901703">
    <property type="term" value="P:protein localization involved in auxin polar transport"/>
    <property type="evidence" value="ECO:0000316"/>
    <property type="project" value="TAIR"/>
</dbReference>
<dbReference type="CDD" id="cd00170">
    <property type="entry name" value="SEC14"/>
    <property type="match status" value="1"/>
</dbReference>
<dbReference type="FunFam" id="1.10.8.20:FF:000008">
    <property type="entry name" value="SEC14 cytosolic factor family protein"/>
    <property type="match status" value="1"/>
</dbReference>
<dbReference type="FunFam" id="3.40.525.10:FF:000022">
    <property type="entry name" value="SEC14 cytosolic factor family protein"/>
    <property type="match status" value="1"/>
</dbReference>
<dbReference type="Gene3D" id="3.40.525.10">
    <property type="entry name" value="CRAL-TRIO lipid binding domain"/>
    <property type="match status" value="1"/>
</dbReference>
<dbReference type="Gene3D" id="2.60.120.680">
    <property type="entry name" value="GOLD domain"/>
    <property type="match status" value="1"/>
</dbReference>
<dbReference type="Gene3D" id="1.10.8.20">
    <property type="entry name" value="N-terminal domain of phosphatidylinositol transfer protein sec14p"/>
    <property type="match status" value="1"/>
</dbReference>
<dbReference type="InterPro" id="IPR001251">
    <property type="entry name" value="CRAL-TRIO_dom"/>
</dbReference>
<dbReference type="InterPro" id="IPR036865">
    <property type="entry name" value="CRAL-TRIO_dom_sf"/>
</dbReference>
<dbReference type="InterPro" id="IPR011074">
    <property type="entry name" value="CRAL/TRIO_N_dom"/>
</dbReference>
<dbReference type="InterPro" id="IPR036273">
    <property type="entry name" value="CRAL/TRIO_N_dom_sf"/>
</dbReference>
<dbReference type="InterPro" id="IPR009038">
    <property type="entry name" value="GOLD_dom"/>
</dbReference>
<dbReference type="InterPro" id="IPR036598">
    <property type="entry name" value="GOLD_dom_sf"/>
</dbReference>
<dbReference type="InterPro" id="IPR044834">
    <property type="entry name" value="PATL"/>
</dbReference>
<dbReference type="InterPro" id="IPR056794">
    <property type="entry name" value="PATL1-6_C_GOLD"/>
</dbReference>
<dbReference type="PANTHER" id="PTHR45932">
    <property type="entry name" value="PATELLIN-1"/>
    <property type="match status" value="1"/>
</dbReference>
<dbReference type="PANTHER" id="PTHR45932:SF4">
    <property type="entry name" value="PATELLIN-6"/>
    <property type="match status" value="1"/>
</dbReference>
<dbReference type="Pfam" id="PF00650">
    <property type="entry name" value="CRAL_TRIO"/>
    <property type="match status" value="1"/>
</dbReference>
<dbReference type="Pfam" id="PF03765">
    <property type="entry name" value="CRAL_TRIO_N"/>
    <property type="match status" value="1"/>
</dbReference>
<dbReference type="Pfam" id="PF25099">
    <property type="entry name" value="GOLD_PATL1_C"/>
    <property type="match status" value="1"/>
</dbReference>
<dbReference type="SMART" id="SM01100">
    <property type="entry name" value="CRAL_TRIO_N"/>
    <property type="match status" value="1"/>
</dbReference>
<dbReference type="SMART" id="SM00516">
    <property type="entry name" value="SEC14"/>
    <property type="match status" value="1"/>
</dbReference>
<dbReference type="SUPFAM" id="SSF52087">
    <property type="entry name" value="CRAL/TRIO domain"/>
    <property type="match status" value="1"/>
</dbReference>
<dbReference type="SUPFAM" id="SSF46938">
    <property type="entry name" value="CRAL/TRIO N-terminal domain"/>
    <property type="match status" value="1"/>
</dbReference>
<dbReference type="SUPFAM" id="SSF101576">
    <property type="entry name" value="Supernatant protein factor (SPF), C-terminal domain"/>
    <property type="match status" value="1"/>
</dbReference>
<dbReference type="PROSITE" id="PS50191">
    <property type="entry name" value="CRAL_TRIO"/>
    <property type="match status" value="1"/>
</dbReference>
<dbReference type="PROSITE" id="PS50866">
    <property type="entry name" value="GOLD"/>
    <property type="match status" value="1"/>
</dbReference>
<accession>Q9SCU1</accession>
<accession>Q9XFS6</accession>
<name>PATL6_ARATH</name>
<feature type="chain" id="PRO_0000215590" description="Patellin-6">
    <location>
        <begin position="1"/>
        <end position="409"/>
    </location>
</feature>
<feature type="domain" description="CRAL-TRIO" evidence="2">
    <location>
        <begin position="116"/>
        <end position="294"/>
    </location>
</feature>
<feature type="domain" description="GOLD" evidence="3">
    <location>
        <begin position="270"/>
        <end position="404"/>
    </location>
</feature>
<gene>
    <name type="primary">PATL6</name>
    <name type="ordered locus">At3g51670</name>
    <name type="ORF">T18N14.50</name>
</gene>
<organism>
    <name type="scientific">Arabidopsis thaliana</name>
    <name type="common">Mouse-ear cress</name>
    <dbReference type="NCBI Taxonomy" id="3702"/>
    <lineage>
        <taxon>Eukaryota</taxon>
        <taxon>Viridiplantae</taxon>
        <taxon>Streptophyta</taxon>
        <taxon>Embryophyta</taxon>
        <taxon>Tracheophyta</taxon>
        <taxon>Spermatophyta</taxon>
        <taxon>Magnoliopsida</taxon>
        <taxon>eudicotyledons</taxon>
        <taxon>Gunneridae</taxon>
        <taxon>Pentapetalae</taxon>
        <taxon>rosids</taxon>
        <taxon>malvids</taxon>
        <taxon>Brassicales</taxon>
        <taxon>Brassicaceae</taxon>
        <taxon>Camelineae</taxon>
        <taxon>Arabidopsis</taxon>
    </lineage>
</organism>
<proteinExistence type="evidence at transcript level"/>
<keyword id="KW-0131">Cell cycle</keyword>
<keyword id="KW-0132">Cell division</keyword>
<keyword id="KW-0175">Coiled coil</keyword>
<keyword id="KW-0963">Cytoplasm</keyword>
<keyword id="KW-0446">Lipid-binding</keyword>
<keyword id="KW-0472">Membrane</keyword>
<keyword id="KW-1185">Reference proteome</keyword>
<keyword id="KW-0813">Transport</keyword>
<sequence>MDASLSPFDHQKTQNTEPKKSFITSLITLRSNNIKEDTYFVSELKPTEQKSLQELKEKLSASSSKASSMWGVSLLGGDDKADVILLKFLRARDFKVADSLRMLEKCLEWREEFKAEKLTEEDLGFKDLEGKVAYMRGYDKEGHPVCYNAYGVFKEKEMYERVFGDEEKLNKFLRWRVQVLERGVKMLHFKPGGVNSIIQVTDLKDMPKRELRVASNQILSLFQDNYPELVATKIFINVPWYFSVIYSMFSPFLTQRTKSKFVMSKEGNAAETLYKFIRPEDIPVQYGGLSRPTDSQNGPPKPASEFSIKGGEKVNIQIEGIEGGATITWDIVVGGWDLEYSAEFVPNAEESYAIVVEKPKKMKATDEAVCNSFTTVEAGKLILSVDNTLSRKKKVAAYRYTVRKSTTTV</sequence>
<protein>
    <recommendedName>
        <fullName>Patellin-6</fullName>
    </recommendedName>
</protein>
<evidence type="ECO:0000250" key="1"/>
<evidence type="ECO:0000255" key="2">
    <source>
        <dbReference type="PROSITE-ProRule" id="PRU00056"/>
    </source>
</evidence>
<evidence type="ECO:0000255" key="3">
    <source>
        <dbReference type="PROSITE-ProRule" id="PRU00096"/>
    </source>
</evidence>
<evidence type="ECO:0000305" key="4"/>
<comment type="function">
    <text evidence="1">Carrier protein that may be involved in membrane-trafficking events associated with cell-plate formation during cytokinesis. Binds to some hydrophobic molecules such as phosphoinositides and promotes their transfer between the different cellular sites (By similarity).</text>
</comment>
<comment type="subcellular location">
    <subcellularLocation>
        <location evidence="1">Membrane</location>
        <topology evidence="1">Peripheral membrane protein</topology>
    </subcellularLocation>
    <subcellularLocation>
        <location evidence="1">Cytoplasm</location>
    </subcellularLocation>
    <text evidence="1">Mainly membrane-associated. Also cytoplasmic (By similarity).</text>
</comment>
<comment type="miscellaneous">
    <text>'Patella' means 'small plate' in Latin.</text>
</comment>
<comment type="similarity">
    <text evidence="4">Belongs to the patellin family.</text>
</comment>
<comment type="sequence caution" evidence="4">
    <conflict type="erroneous initiation">
        <sequence resource="EMBL-CDS" id="CAB43521"/>
    </conflict>
</comment>
<reference key="1">
    <citation type="journal article" date="2000" name="Nature">
        <title>Sequence and analysis of chromosome 3 of the plant Arabidopsis thaliana.</title>
        <authorList>
            <person name="Salanoubat M."/>
            <person name="Lemcke K."/>
            <person name="Rieger M."/>
            <person name="Ansorge W."/>
            <person name="Unseld M."/>
            <person name="Fartmann B."/>
            <person name="Valle G."/>
            <person name="Bloecker H."/>
            <person name="Perez-Alonso M."/>
            <person name="Obermaier B."/>
            <person name="Delseny M."/>
            <person name="Boutry M."/>
            <person name="Grivell L.A."/>
            <person name="Mache R."/>
            <person name="Puigdomenech P."/>
            <person name="De Simone V."/>
            <person name="Choisne N."/>
            <person name="Artiguenave F."/>
            <person name="Robert C."/>
            <person name="Brottier P."/>
            <person name="Wincker P."/>
            <person name="Cattolico L."/>
            <person name="Weissenbach J."/>
            <person name="Saurin W."/>
            <person name="Quetier F."/>
            <person name="Schaefer M."/>
            <person name="Mueller-Auer S."/>
            <person name="Gabel C."/>
            <person name="Fuchs M."/>
            <person name="Benes V."/>
            <person name="Wurmbach E."/>
            <person name="Drzonek H."/>
            <person name="Erfle H."/>
            <person name="Jordan N."/>
            <person name="Bangert S."/>
            <person name="Wiedelmann R."/>
            <person name="Kranz H."/>
            <person name="Voss H."/>
            <person name="Holland R."/>
            <person name="Brandt P."/>
            <person name="Nyakatura G."/>
            <person name="Vezzi A."/>
            <person name="D'Angelo M."/>
            <person name="Pallavicini A."/>
            <person name="Toppo S."/>
            <person name="Simionati B."/>
            <person name="Conrad A."/>
            <person name="Hornischer K."/>
            <person name="Kauer G."/>
            <person name="Loehnert T.-H."/>
            <person name="Nordsiek G."/>
            <person name="Reichelt J."/>
            <person name="Scharfe M."/>
            <person name="Schoen O."/>
            <person name="Bargues M."/>
            <person name="Terol J."/>
            <person name="Climent J."/>
            <person name="Navarro P."/>
            <person name="Collado C."/>
            <person name="Perez-Perez A."/>
            <person name="Ottenwaelder B."/>
            <person name="Duchemin D."/>
            <person name="Cooke R."/>
            <person name="Laudie M."/>
            <person name="Berger-Llauro C."/>
            <person name="Purnelle B."/>
            <person name="Masuy D."/>
            <person name="de Haan M."/>
            <person name="Maarse A.C."/>
            <person name="Alcaraz J.-P."/>
            <person name="Cottet A."/>
            <person name="Casacuberta E."/>
            <person name="Monfort A."/>
            <person name="Argiriou A."/>
            <person name="Flores M."/>
            <person name="Liguori R."/>
            <person name="Vitale D."/>
            <person name="Mannhaupt G."/>
            <person name="Haase D."/>
            <person name="Schoof H."/>
            <person name="Rudd S."/>
            <person name="Zaccaria P."/>
            <person name="Mewes H.-W."/>
            <person name="Mayer K.F.X."/>
            <person name="Kaul S."/>
            <person name="Town C.D."/>
            <person name="Koo H.L."/>
            <person name="Tallon L.J."/>
            <person name="Jenkins J."/>
            <person name="Rooney T."/>
            <person name="Rizzo M."/>
            <person name="Walts A."/>
            <person name="Utterback T."/>
            <person name="Fujii C.Y."/>
            <person name="Shea T.P."/>
            <person name="Creasy T.H."/>
            <person name="Haas B."/>
            <person name="Maiti R."/>
            <person name="Wu D."/>
            <person name="Peterson J."/>
            <person name="Van Aken S."/>
            <person name="Pai G."/>
            <person name="Militscher J."/>
            <person name="Sellers P."/>
            <person name="Gill J.E."/>
            <person name="Feldblyum T.V."/>
            <person name="Preuss D."/>
            <person name="Lin X."/>
            <person name="Nierman W.C."/>
            <person name="Salzberg S.L."/>
            <person name="White O."/>
            <person name="Venter J.C."/>
            <person name="Fraser C.M."/>
            <person name="Kaneko T."/>
            <person name="Nakamura Y."/>
            <person name="Sato S."/>
            <person name="Kato T."/>
            <person name="Asamizu E."/>
            <person name="Sasamoto S."/>
            <person name="Kimura T."/>
            <person name="Idesawa K."/>
            <person name="Kawashima K."/>
            <person name="Kishida Y."/>
            <person name="Kiyokawa C."/>
            <person name="Kohara M."/>
            <person name="Matsumoto M."/>
            <person name="Matsuno A."/>
            <person name="Muraki A."/>
            <person name="Nakayama S."/>
            <person name="Nakazaki N."/>
            <person name="Shinpo S."/>
            <person name="Takeuchi C."/>
            <person name="Wada T."/>
            <person name="Watanabe A."/>
            <person name="Yamada M."/>
            <person name="Yasuda M."/>
            <person name="Tabata S."/>
        </authorList>
    </citation>
    <scope>NUCLEOTIDE SEQUENCE [LARGE SCALE GENOMIC DNA]</scope>
    <source>
        <strain>cv. Columbia</strain>
    </source>
</reference>
<reference key="2">
    <citation type="journal article" date="2017" name="Plant J.">
        <title>Araport11: a complete reannotation of the Arabidopsis thaliana reference genome.</title>
        <authorList>
            <person name="Cheng C.Y."/>
            <person name="Krishnakumar V."/>
            <person name="Chan A.P."/>
            <person name="Thibaud-Nissen F."/>
            <person name="Schobel S."/>
            <person name="Town C.D."/>
        </authorList>
    </citation>
    <scope>GENOME REANNOTATION</scope>
    <source>
        <strain>cv. Columbia</strain>
    </source>
</reference>
<reference key="3">
    <citation type="journal article" date="2003" name="Science">
        <title>Empirical analysis of transcriptional activity in the Arabidopsis genome.</title>
        <authorList>
            <person name="Yamada K."/>
            <person name="Lim J."/>
            <person name="Dale J.M."/>
            <person name="Chen H."/>
            <person name="Shinn P."/>
            <person name="Palm C.J."/>
            <person name="Southwick A.M."/>
            <person name="Wu H.C."/>
            <person name="Kim C.J."/>
            <person name="Nguyen M."/>
            <person name="Pham P.K."/>
            <person name="Cheuk R.F."/>
            <person name="Karlin-Newmann G."/>
            <person name="Liu S.X."/>
            <person name="Lam B."/>
            <person name="Sakano H."/>
            <person name="Wu T."/>
            <person name="Yu G."/>
            <person name="Miranda M."/>
            <person name="Quach H.L."/>
            <person name="Tripp M."/>
            <person name="Chang C.H."/>
            <person name="Lee J.M."/>
            <person name="Toriumi M.J."/>
            <person name="Chan M.M."/>
            <person name="Tang C.C."/>
            <person name="Onodera C.S."/>
            <person name="Deng J.M."/>
            <person name="Akiyama K."/>
            <person name="Ansari Y."/>
            <person name="Arakawa T."/>
            <person name="Banh J."/>
            <person name="Banno F."/>
            <person name="Bowser L."/>
            <person name="Brooks S.Y."/>
            <person name="Carninci P."/>
            <person name="Chao Q."/>
            <person name="Choy N."/>
            <person name="Enju A."/>
            <person name="Goldsmith A.D."/>
            <person name="Gurjal M."/>
            <person name="Hansen N.F."/>
            <person name="Hayashizaki Y."/>
            <person name="Johnson-Hopson C."/>
            <person name="Hsuan V.W."/>
            <person name="Iida K."/>
            <person name="Karnes M."/>
            <person name="Khan S."/>
            <person name="Koesema E."/>
            <person name="Ishida J."/>
            <person name="Jiang P.X."/>
            <person name="Jones T."/>
            <person name="Kawai J."/>
            <person name="Kamiya A."/>
            <person name="Meyers C."/>
            <person name="Nakajima M."/>
            <person name="Narusaka M."/>
            <person name="Seki M."/>
            <person name="Sakurai T."/>
            <person name="Satou M."/>
            <person name="Tamse R."/>
            <person name="Vaysberg M."/>
            <person name="Wallender E.K."/>
            <person name="Wong C."/>
            <person name="Yamamura Y."/>
            <person name="Yuan S."/>
            <person name="Shinozaki K."/>
            <person name="Davis R.W."/>
            <person name="Theologis A."/>
            <person name="Ecker J.R."/>
        </authorList>
    </citation>
    <scope>NUCLEOTIDE SEQUENCE [LARGE SCALE MRNA]</scope>
    <source>
        <strain>cv. Columbia</strain>
    </source>
</reference>
<reference key="4">
    <citation type="submission" date="1999-05" db="EMBL/GenBank/DDBJ databases">
        <authorList>
            <person name="Cooke R.M."/>
        </authorList>
    </citation>
    <scope>NUCLEOTIDE SEQUENCE [MRNA] OF 248-409</scope>
    <source>
        <strain>cv. Columbia</strain>
    </source>
</reference>
<reference key="5">
    <citation type="journal article" date="2004" name="Plant Physiol.">
        <title>Patellin1, a novel Sec14-like protein, localizes to the cell plate and binds phosphoinositides.</title>
        <authorList>
            <person name="Peterman T.K."/>
            <person name="Ohol Y.M."/>
            <person name="McReynolds L.J."/>
            <person name="Luna E.J."/>
        </authorList>
    </citation>
    <scope>GENE FAMILY</scope>
    <scope>NOMENCLATURE</scope>
</reference>